<name>DPDH_PYRIL</name>
<keyword id="KW-1003">Cell membrane</keyword>
<keyword id="KW-0903">Direct protein sequencing</keyword>
<keyword id="KW-0285">Flavoprotein</keyword>
<keyword id="KW-0472">Membrane</keyword>
<keyword id="KW-0560">Oxidoreductase</keyword>
<evidence type="ECO:0000255" key="1"/>
<evidence type="ECO:0000269" key="2">
    <source>
    </source>
</evidence>
<evidence type="ECO:0000269" key="3">
    <source>
    </source>
</evidence>
<evidence type="ECO:0000305" key="4"/>
<dbReference type="EC" id="1.5.99.13"/>
<dbReference type="EMBL" id="AB071692">
    <property type="protein sequence ID" value="BAB88883.1"/>
    <property type="molecule type" value="Genomic_DNA"/>
</dbReference>
<dbReference type="EMBL" id="CP000504">
    <property type="protein sequence ID" value="ABL89010.1"/>
    <property type="molecule type" value="Genomic_DNA"/>
</dbReference>
<dbReference type="RefSeq" id="WP_011763585.1">
    <property type="nucleotide sequence ID" value="NC_008701.1"/>
</dbReference>
<dbReference type="SMR" id="A1RVM8"/>
<dbReference type="STRING" id="384616.Pisl_1862"/>
<dbReference type="GeneID" id="4618108"/>
<dbReference type="KEGG" id="pis:Pisl_1862"/>
<dbReference type="eggNOG" id="arCOG00758">
    <property type="taxonomic scope" value="Archaea"/>
</dbReference>
<dbReference type="HOGENOM" id="CLU_753592_0_0_2"/>
<dbReference type="OrthoDB" id="168391at2157"/>
<dbReference type="BioCyc" id="MetaCyc:MONOMER-15358"/>
<dbReference type="BRENDA" id="1.5.99.13">
    <property type="organism ID" value="5240"/>
</dbReference>
<dbReference type="Proteomes" id="UP000002595">
    <property type="component" value="Chromosome"/>
</dbReference>
<dbReference type="GO" id="GO:0005737">
    <property type="term" value="C:cytoplasm"/>
    <property type="evidence" value="ECO:0007669"/>
    <property type="project" value="TreeGrafter"/>
</dbReference>
<dbReference type="GO" id="GO:0016020">
    <property type="term" value="C:membrane"/>
    <property type="evidence" value="ECO:0000314"/>
    <property type="project" value="UniProtKB"/>
</dbReference>
<dbReference type="GO" id="GO:0005886">
    <property type="term" value="C:plasma membrane"/>
    <property type="evidence" value="ECO:0007669"/>
    <property type="project" value="UniProtKB-SubCell"/>
</dbReference>
<dbReference type="GO" id="GO:0050660">
    <property type="term" value="F:flavin adenine dinucleotide binding"/>
    <property type="evidence" value="ECO:0000314"/>
    <property type="project" value="UniProtKB"/>
</dbReference>
<dbReference type="GO" id="GO:0016645">
    <property type="term" value="F:oxidoreductase activity, acting on the CH-NH group of donors"/>
    <property type="evidence" value="ECO:0000314"/>
    <property type="project" value="UniProtKB"/>
</dbReference>
<dbReference type="Gene3D" id="3.30.9.10">
    <property type="entry name" value="D-Amino Acid Oxidase, subunit A, domain 2"/>
    <property type="match status" value="1"/>
</dbReference>
<dbReference type="Gene3D" id="3.50.50.60">
    <property type="entry name" value="FAD/NAD(P)-binding domain"/>
    <property type="match status" value="1"/>
</dbReference>
<dbReference type="InterPro" id="IPR053679">
    <property type="entry name" value="DadA_oxidoreductase"/>
</dbReference>
<dbReference type="InterPro" id="IPR006076">
    <property type="entry name" value="FAD-dep_OxRdtase"/>
</dbReference>
<dbReference type="InterPro" id="IPR036188">
    <property type="entry name" value="FAD/NAD-bd_sf"/>
</dbReference>
<dbReference type="NCBIfam" id="NF040813">
    <property type="entry name" value="pro_dh_Thprot"/>
    <property type="match status" value="1"/>
</dbReference>
<dbReference type="PANTHER" id="PTHR13847:SF286">
    <property type="entry name" value="D-AMINO ACID DEHYDROGENASE"/>
    <property type="match status" value="1"/>
</dbReference>
<dbReference type="PANTHER" id="PTHR13847">
    <property type="entry name" value="SARCOSINE DEHYDROGENASE-RELATED"/>
    <property type="match status" value="1"/>
</dbReference>
<dbReference type="Pfam" id="PF01266">
    <property type="entry name" value="DAO"/>
    <property type="match status" value="1"/>
</dbReference>
<dbReference type="PRINTS" id="PR00411">
    <property type="entry name" value="PNDRDTASEI"/>
</dbReference>
<dbReference type="SUPFAM" id="SSF51971">
    <property type="entry name" value="Nucleotide-binding domain"/>
    <property type="match status" value="1"/>
</dbReference>
<organism>
    <name type="scientific">Pyrobaculum islandicum (strain DSM 4184 / JCM 9189 / GEO3)</name>
    <dbReference type="NCBI Taxonomy" id="384616"/>
    <lineage>
        <taxon>Archaea</taxon>
        <taxon>Thermoproteota</taxon>
        <taxon>Thermoprotei</taxon>
        <taxon>Thermoproteales</taxon>
        <taxon>Thermoproteaceae</taxon>
        <taxon>Pyrobaculum</taxon>
    </lineage>
</organism>
<comment type="function">
    <text evidence="2 3">Catalyzes the dehydrogenation of D-proline. Can also use other D-amino acids, but with lower efficiency.</text>
</comment>
<comment type="catalytic activity">
    <reaction evidence="2 3">
        <text>D-proline + A = 1-pyrroline-2-carboxylate + AH2</text>
        <dbReference type="Rhea" id="RHEA:27306"/>
        <dbReference type="ChEBI" id="CHEBI:13193"/>
        <dbReference type="ChEBI" id="CHEBI:17499"/>
        <dbReference type="ChEBI" id="CHEBI:39785"/>
        <dbReference type="ChEBI" id="CHEBI:57726"/>
        <dbReference type="EC" id="1.5.99.13"/>
    </reaction>
</comment>
<comment type="cofactor">
    <cofactor evidence="2">
        <name>FAD</name>
        <dbReference type="ChEBI" id="CHEBI:57692"/>
    </cofactor>
</comment>
<comment type="biophysicochemical properties">
    <kinetics>
        <KM evidence="2">4.2 mM for D-proline</KM>
        <KM evidence="2">9.5 mM for allo-4-hydroxy-D-proline</KM>
    </kinetics>
    <phDependence>
        <text evidence="2">Optimum pH is 7.5. Half of activity at pH 6.5 and 8.5.</text>
    </phDependence>
    <temperatureDependence>
        <text evidence="2">Optimum temperature is above 70 degrees Celsius.</text>
    </temperatureDependence>
</comment>
<comment type="subunit">
    <text evidence="2">Homotetramer.</text>
</comment>
<comment type="subcellular location">
    <subcellularLocation>
        <location evidence="2">Cell membrane</location>
        <topology evidence="2">Peripheral membrane protein</topology>
    </subcellularLocation>
</comment>
<comment type="similarity">
    <text evidence="4">Belongs to the DadA oxidoreductase family.</text>
</comment>
<accession>A1RVM8</accession>
<accession>Q8U4S7</accession>
<proteinExistence type="evidence at protein level"/>
<reference key="1">
    <citation type="journal article" date="2002" name="J. Biol. Chem.">
        <title>Dye-linked D-proline dehydrogenase from hyperthermophilic archaeon Pyrobaculum islandicum is a novel FAD-dependent amino acid dehydrogenase.</title>
        <authorList>
            <person name="Satomura T."/>
            <person name="Kawakami R."/>
            <person name="Sakuraba H."/>
            <person name="Ohshima T."/>
        </authorList>
    </citation>
    <scope>NUCLEOTIDE SEQUENCE [GENOMIC DNA]</scope>
    <scope>PROTEIN SEQUENCE OF 1-28</scope>
    <scope>FUNCTION</scope>
    <scope>CATALYTIC ACTIVITY</scope>
    <scope>COFACTOR</scope>
    <scope>BIOPHYSICOCHEMICAL PROPERTIES</scope>
    <scope>SUBUNIT</scope>
    <scope>SUBCELLULAR LOCATION</scope>
    <source>
        <strain>DSM 4184 / JCM 9189 / GEO3</strain>
    </source>
</reference>
<reference key="2">
    <citation type="submission" date="2006-12" db="EMBL/GenBank/DDBJ databases">
        <title>Complete sequence of Pyrobaculum islandicum DSM 4184.</title>
        <authorList>
            <person name="Copeland A."/>
            <person name="Lucas S."/>
            <person name="Lapidus A."/>
            <person name="Barry K."/>
            <person name="Detter J.C."/>
            <person name="Glavina del Rio T."/>
            <person name="Dalin E."/>
            <person name="Tice H."/>
            <person name="Pitluck S."/>
            <person name="Meincke L."/>
            <person name="Brettin T."/>
            <person name="Bruce D."/>
            <person name="Han C."/>
            <person name="Tapia R."/>
            <person name="Gilna P."/>
            <person name="Schmutz J."/>
            <person name="Larimer F."/>
            <person name="Land M."/>
            <person name="Hauser L."/>
            <person name="Kyrpides N."/>
            <person name="Mikhailova N."/>
            <person name="Cozen A.E."/>
            <person name="Fitz-Gibbon S.T."/>
            <person name="House C.H."/>
            <person name="Saltikov C."/>
            <person name="Lowe T."/>
            <person name="Richardson P."/>
        </authorList>
    </citation>
    <scope>NUCLEOTIDE SEQUENCE [LARGE SCALE GENOMIC DNA]</scope>
    <source>
        <strain>DSM 4184 / JCM 9189 / GEO3</strain>
    </source>
</reference>
<reference key="3">
    <citation type="journal article" date="2008" name="Anal. Chim. Acta">
        <title>Development of a D-amino acids electrochemical sensor based on immobilization of thermostable D-proline dehydrogenase within agar gel membrane.</title>
        <authorList>
            <person name="Tani Y."/>
            <person name="Tanaka K."/>
            <person name="Yabutani T."/>
            <person name="Mishima Y."/>
            <person name="Sakuraba H."/>
            <person name="Ohshima T."/>
            <person name="Motonaka J."/>
        </authorList>
    </citation>
    <scope>FUNCTION</scope>
    <scope>CATALYTIC ACTIVITY</scope>
</reference>
<protein>
    <recommendedName>
        <fullName>D-proline dehydrogenase</fullName>
        <shortName>D-Pro DH</shortName>
        <shortName>D-Pro dehydrogenase</shortName>
        <ecNumber>1.5.99.13</ecNumber>
    </recommendedName>
</protein>
<gene>
    <name type="primary">dpdh</name>
    <name type="ordered locus">Pisl_1862</name>
</gene>
<sequence>MKVAIVGGGIIGLFTAYHLRQQGADVVIIEQGEPGGWSKAAAGILEFTRFVINRINVRSYPKRYLSMALRGDARIKTWDWRWISAYLRAWGREPTQDMWEAIKTLGEYSWRQYRALAEAENDFAYSEEPLYEVGIDVAAALEEAKRDPLSPKVETGRCCGREALVYLDAAKLSTEDFVARMLRELQGVQMVRRRAQEVAGREVWLEGGDVVKADAVVVAAGYWARKFGIPVAPFKGYGFRTTAKAQSMFIEMTKGVAVVPLPKWTKVTGRFDLDGTEDHSPSARVLQRAREVLGNFEVLDMSVGYRPCTPDGFPIVDKVGEVVIVTGACRLGWTYGPALGKLAADLALGKPGVEALTARRFRR</sequence>
<feature type="chain" id="PRO_0000424074" description="D-proline dehydrogenase">
    <location>
        <begin position="1"/>
        <end position="363"/>
    </location>
</feature>
<feature type="binding site" evidence="1">
    <location>
        <begin position="3"/>
        <end position="17"/>
    </location>
    <ligand>
        <name>FAD</name>
        <dbReference type="ChEBI" id="CHEBI:57692"/>
    </ligand>
</feature>